<dbReference type="EC" id="2.3.1.117" evidence="1"/>
<dbReference type="EMBL" id="CP000284">
    <property type="protein sequence ID" value="ABE50133.1"/>
    <property type="molecule type" value="Genomic_DNA"/>
</dbReference>
<dbReference type="RefSeq" id="WP_011480087.1">
    <property type="nucleotide sequence ID" value="NC_007947.1"/>
</dbReference>
<dbReference type="SMR" id="Q1H054"/>
<dbReference type="STRING" id="265072.Mfla_1866"/>
<dbReference type="KEGG" id="mfa:Mfla_1866"/>
<dbReference type="eggNOG" id="COG2171">
    <property type="taxonomic scope" value="Bacteria"/>
</dbReference>
<dbReference type="HOGENOM" id="CLU_050859_0_1_4"/>
<dbReference type="OrthoDB" id="9775362at2"/>
<dbReference type="UniPathway" id="UPA00034">
    <property type="reaction ID" value="UER00019"/>
</dbReference>
<dbReference type="Proteomes" id="UP000002440">
    <property type="component" value="Chromosome"/>
</dbReference>
<dbReference type="GO" id="GO:0005737">
    <property type="term" value="C:cytoplasm"/>
    <property type="evidence" value="ECO:0007669"/>
    <property type="project" value="UniProtKB-SubCell"/>
</dbReference>
<dbReference type="GO" id="GO:0008666">
    <property type="term" value="F:2,3,4,5-tetrahydropyridine-2,6-dicarboxylate N-succinyltransferase activity"/>
    <property type="evidence" value="ECO:0007669"/>
    <property type="project" value="UniProtKB-UniRule"/>
</dbReference>
<dbReference type="GO" id="GO:0016779">
    <property type="term" value="F:nucleotidyltransferase activity"/>
    <property type="evidence" value="ECO:0007669"/>
    <property type="project" value="TreeGrafter"/>
</dbReference>
<dbReference type="GO" id="GO:0019877">
    <property type="term" value="P:diaminopimelate biosynthetic process"/>
    <property type="evidence" value="ECO:0007669"/>
    <property type="project" value="UniProtKB-UniRule"/>
</dbReference>
<dbReference type="GO" id="GO:0009089">
    <property type="term" value="P:lysine biosynthetic process via diaminopimelate"/>
    <property type="evidence" value="ECO:0007669"/>
    <property type="project" value="UniProtKB-UniRule"/>
</dbReference>
<dbReference type="CDD" id="cd03350">
    <property type="entry name" value="LbH_THP_succinylT"/>
    <property type="match status" value="1"/>
</dbReference>
<dbReference type="Gene3D" id="2.160.10.10">
    <property type="entry name" value="Hexapeptide repeat proteins"/>
    <property type="match status" value="1"/>
</dbReference>
<dbReference type="Gene3D" id="1.10.166.10">
    <property type="entry name" value="Tetrahydrodipicolinate-N-succinyltransferase, N-terminal domain"/>
    <property type="match status" value="1"/>
</dbReference>
<dbReference type="HAMAP" id="MF_00811">
    <property type="entry name" value="DapD"/>
    <property type="match status" value="1"/>
</dbReference>
<dbReference type="InterPro" id="IPR005664">
    <property type="entry name" value="DapD_Trfase_Hexpep_rpt_fam"/>
</dbReference>
<dbReference type="InterPro" id="IPR001451">
    <property type="entry name" value="Hexapep"/>
</dbReference>
<dbReference type="InterPro" id="IPR018357">
    <property type="entry name" value="Hexapep_transf_CS"/>
</dbReference>
<dbReference type="InterPro" id="IPR023180">
    <property type="entry name" value="THP_succinylTrfase_dom1"/>
</dbReference>
<dbReference type="InterPro" id="IPR037133">
    <property type="entry name" value="THP_succinylTrfase_N_sf"/>
</dbReference>
<dbReference type="InterPro" id="IPR011004">
    <property type="entry name" value="Trimer_LpxA-like_sf"/>
</dbReference>
<dbReference type="NCBIfam" id="TIGR00965">
    <property type="entry name" value="dapD"/>
    <property type="match status" value="1"/>
</dbReference>
<dbReference type="NCBIfam" id="NF008808">
    <property type="entry name" value="PRK11830.1"/>
    <property type="match status" value="1"/>
</dbReference>
<dbReference type="PANTHER" id="PTHR19136:SF52">
    <property type="entry name" value="2,3,4,5-TETRAHYDROPYRIDINE-2,6-DICARBOXYLATE N-SUCCINYLTRANSFERASE"/>
    <property type="match status" value="1"/>
</dbReference>
<dbReference type="PANTHER" id="PTHR19136">
    <property type="entry name" value="MOLYBDENUM COFACTOR GUANYLYLTRANSFERASE"/>
    <property type="match status" value="1"/>
</dbReference>
<dbReference type="Pfam" id="PF14602">
    <property type="entry name" value="Hexapep_2"/>
    <property type="match status" value="1"/>
</dbReference>
<dbReference type="Pfam" id="PF14805">
    <property type="entry name" value="THDPS_N_2"/>
    <property type="match status" value="1"/>
</dbReference>
<dbReference type="SUPFAM" id="SSF51161">
    <property type="entry name" value="Trimeric LpxA-like enzymes"/>
    <property type="match status" value="1"/>
</dbReference>
<dbReference type="PROSITE" id="PS00101">
    <property type="entry name" value="HEXAPEP_TRANSFERASES"/>
    <property type="match status" value="1"/>
</dbReference>
<feature type="chain" id="PRO_1000047152" description="2,3,4,5-tetrahydropyridine-2,6-dicarboxylate N-succinyltransferase">
    <location>
        <begin position="1"/>
        <end position="274"/>
    </location>
</feature>
<feature type="binding site" evidence="1">
    <location>
        <position position="105"/>
    </location>
    <ligand>
        <name>substrate</name>
    </ligand>
</feature>
<feature type="binding site" evidence="1">
    <location>
        <position position="142"/>
    </location>
    <ligand>
        <name>substrate</name>
    </ligand>
</feature>
<organism>
    <name type="scientific">Methylobacillus flagellatus (strain ATCC 51484 / DSM 6875 / VKM B-1610 / KT)</name>
    <dbReference type="NCBI Taxonomy" id="265072"/>
    <lineage>
        <taxon>Bacteria</taxon>
        <taxon>Pseudomonadati</taxon>
        <taxon>Pseudomonadota</taxon>
        <taxon>Betaproteobacteria</taxon>
        <taxon>Nitrosomonadales</taxon>
        <taxon>Methylophilaceae</taxon>
        <taxon>Methylobacillus</taxon>
    </lineage>
</organism>
<reference key="1">
    <citation type="submission" date="2006-03" db="EMBL/GenBank/DDBJ databases">
        <title>Complete sequence of Methylobacillus flagellatus KT.</title>
        <authorList>
            <consortium name="US DOE Joint Genome Institute"/>
            <person name="Copeland A."/>
            <person name="Lucas S."/>
            <person name="Lapidus A."/>
            <person name="Barry K."/>
            <person name="Detter J.C."/>
            <person name="Glavina del Rio T."/>
            <person name="Hammon N."/>
            <person name="Israni S."/>
            <person name="Dalin E."/>
            <person name="Tice H."/>
            <person name="Pitluck S."/>
            <person name="Brettin T."/>
            <person name="Bruce D."/>
            <person name="Han C."/>
            <person name="Tapia R."/>
            <person name="Saunders E."/>
            <person name="Gilna P."/>
            <person name="Schmutz J."/>
            <person name="Larimer F."/>
            <person name="Land M."/>
            <person name="Kyrpides N."/>
            <person name="Anderson I."/>
            <person name="Richardson P."/>
        </authorList>
    </citation>
    <scope>NUCLEOTIDE SEQUENCE [LARGE SCALE GENOMIC DNA]</scope>
    <source>
        <strain>ATCC 51484 / DSM 6875 / VKM B-1610 / KT</strain>
    </source>
</reference>
<keyword id="KW-0012">Acyltransferase</keyword>
<keyword id="KW-0028">Amino-acid biosynthesis</keyword>
<keyword id="KW-0963">Cytoplasm</keyword>
<keyword id="KW-0220">Diaminopimelate biosynthesis</keyword>
<keyword id="KW-0457">Lysine biosynthesis</keyword>
<keyword id="KW-1185">Reference proteome</keyword>
<keyword id="KW-0677">Repeat</keyword>
<keyword id="KW-0808">Transferase</keyword>
<evidence type="ECO:0000255" key="1">
    <source>
        <dbReference type="HAMAP-Rule" id="MF_00811"/>
    </source>
</evidence>
<accession>Q1H054</accession>
<name>DAPD_METFK</name>
<comment type="catalytic activity">
    <reaction evidence="1">
        <text>(S)-2,3,4,5-tetrahydrodipicolinate + succinyl-CoA + H2O = (S)-2-succinylamino-6-oxoheptanedioate + CoA</text>
        <dbReference type="Rhea" id="RHEA:17325"/>
        <dbReference type="ChEBI" id="CHEBI:15377"/>
        <dbReference type="ChEBI" id="CHEBI:15685"/>
        <dbReference type="ChEBI" id="CHEBI:16845"/>
        <dbReference type="ChEBI" id="CHEBI:57287"/>
        <dbReference type="ChEBI" id="CHEBI:57292"/>
        <dbReference type="EC" id="2.3.1.117"/>
    </reaction>
</comment>
<comment type="pathway">
    <text evidence="1">Amino-acid biosynthesis; L-lysine biosynthesis via DAP pathway; LL-2,6-diaminopimelate from (S)-tetrahydrodipicolinate (succinylase route): step 1/3.</text>
</comment>
<comment type="subunit">
    <text evidence="1">Homotrimer.</text>
</comment>
<comment type="subcellular location">
    <subcellularLocation>
        <location evidence="1">Cytoplasm</location>
    </subcellularLocation>
</comment>
<comment type="similarity">
    <text evidence="1">Belongs to the transferase hexapeptide repeat family.</text>
</comment>
<sequence length="274" mass="29451">MSNLQTIIEDAFERRAEITPSTASAEIKDAVFSVLADLDSGKLRVAERTDGQNWVTHQWIKKAVLLSFRLEDNVLLDDGVTKYFDKVPPKFANYTEADFKAGGFRVVPNAIVRRGSFIAKNAVLMPSYVNIGAYVGEGTMVDTWATVGSCAQIGKNVHLSGGVGIGGVLEPVQAGPTIIGDNCFIGARSEVVEGVIVEDNCVISMGVYIGQSTKIYDRETGEIHYGRVPTGSVVVSGNLPSKDGSYSLYCAVIVKKVDEKTLGKVGINELLRGI</sequence>
<proteinExistence type="inferred from homology"/>
<gene>
    <name evidence="1" type="primary">dapD</name>
    <name type="ordered locus">Mfla_1866</name>
</gene>
<protein>
    <recommendedName>
        <fullName evidence="1">2,3,4,5-tetrahydropyridine-2,6-dicarboxylate N-succinyltransferase</fullName>
        <ecNumber evidence="1">2.3.1.117</ecNumber>
    </recommendedName>
    <alternativeName>
        <fullName evidence="1">Tetrahydrodipicolinate N-succinyltransferase</fullName>
        <shortName evidence="1">THDP succinyltransferase</shortName>
        <shortName evidence="1">THP succinyltransferase</shortName>
        <shortName evidence="1">Tetrahydropicolinate succinylase</shortName>
    </alternativeName>
</protein>